<organism>
    <name type="scientific">Mus musculus</name>
    <name type="common">Mouse</name>
    <dbReference type="NCBI Taxonomy" id="10090"/>
    <lineage>
        <taxon>Eukaryota</taxon>
        <taxon>Metazoa</taxon>
        <taxon>Chordata</taxon>
        <taxon>Craniata</taxon>
        <taxon>Vertebrata</taxon>
        <taxon>Euteleostomi</taxon>
        <taxon>Mammalia</taxon>
        <taxon>Eutheria</taxon>
        <taxon>Euarchontoglires</taxon>
        <taxon>Glires</taxon>
        <taxon>Rodentia</taxon>
        <taxon>Myomorpha</taxon>
        <taxon>Muroidea</taxon>
        <taxon>Muridae</taxon>
        <taxon>Murinae</taxon>
        <taxon>Mus</taxon>
        <taxon>Mus</taxon>
    </lineage>
</organism>
<keyword id="KW-0025">Alternative splicing</keyword>
<keyword id="KW-1015">Disulfide bond</keyword>
<keyword id="KW-0325">Glycoprotein</keyword>
<keyword id="KW-0339">Growth factor</keyword>
<keyword id="KW-1185">Reference proteome</keyword>
<keyword id="KW-0964">Secreted</keyword>
<keyword id="KW-0732">Signal</keyword>
<dbReference type="EMBL" id="AF109402">
    <property type="protein sequence ID" value="AAC98691.1"/>
    <property type="molecule type" value="mRNA"/>
</dbReference>
<dbReference type="EMBL" id="AK015393">
    <property type="protein sequence ID" value="BAB29827.1"/>
    <property type="molecule type" value="mRNA"/>
</dbReference>
<dbReference type="EMBL" id="AK053914">
    <property type="protein sequence ID" value="BAC35590.1"/>
    <property type="molecule type" value="mRNA"/>
</dbReference>
<dbReference type="EMBL" id="AK156507">
    <property type="protein sequence ID" value="BAE33737.1"/>
    <property type="molecule type" value="mRNA"/>
</dbReference>
<dbReference type="EMBL" id="BC104328">
    <property type="protein sequence ID" value="AAI04329.1"/>
    <property type="molecule type" value="mRNA"/>
</dbReference>
<dbReference type="EMBL" id="BC104329">
    <property type="protein sequence ID" value="AAI04330.1"/>
    <property type="molecule type" value="mRNA"/>
</dbReference>
<dbReference type="CCDS" id="CCDS18543.1">
    <molecule id="Q9Z0L2-1"/>
</dbReference>
<dbReference type="RefSeq" id="NP_001271120.1">
    <molecule id="Q9Z0L2-1"/>
    <property type="nucleotide sequence ID" value="NM_001284191.1"/>
</dbReference>
<dbReference type="RefSeq" id="NP_001271121.1">
    <property type="nucleotide sequence ID" value="NM_001284192.1"/>
</dbReference>
<dbReference type="RefSeq" id="NP_001271122.1">
    <molecule id="Q9Z0L2-1"/>
    <property type="nucleotide sequence ID" value="NM_001284193.1"/>
</dbReference>
<dbReference type="RefSeq" id="NP_033841.1">
    <molecule id="Q9Z0L2-1"/>
    <property type="nucleotide sequence ID" value="NM_009711.4"/>
</dbReference>
<dbReference type="RefSeq" id="XP_006502753.1">
    <molecule id="Q9Z0L2-1"/>
    <property type="nucleotide sequence ID" value="XM_006502690.3"/>
</dbReference>
<dbReference type="RefSeq" id="XP_006502754.1">
    <molecule id="Q9Z0L2-1"/>
    <property type="nucleotide sequence ID" value="XM_006502691.3"/>
</dbReference>
<dbReference type="RefSeq" id="XP_006502755.1">
    <molecule id="Q9Z0L2-1"/>
    <property type="nucleotide sequence ID" value="XM_006502692.3"/>
</dbReference>
<dbReference type="RefSeq" id="XP_006502756.1">
    <molecule id="Q9Z0L2-1"/>
    <property type="nucleotide sequence ID" value="XM_006502693.3"/>
</dbReference>
<dbReference type="RefSeq" id="XP_011238721.1">
    <molecule id="Q9Z0L2-1"/>
    <property type="nucleotide sequence ID" value="XM_011240419.2"/>
</dbReference>
<dbReference type="RefSeq" id="XP_030108965.1">
    <molecule id="Q9Z0L2-1"/>
    <property type="nucleotide sequence ID" value="XM_030253105.1"/>
</dbReference>
<dbReference type="SMR" id="Q9Z0L2"/>
<dbReference type="BioGRID" id="198213">
    <property type="interactions" value="2"/>
</dbReference>
<dbReference type="FunCoup" id="Q9Z0L2">
    <property type="interactions" value="506"/>
</dbReference>
<dbReference type="STRING" id="10090.ENSMUSP00000064521"/>
<dbReference type="GlyCosmos" id="Q9Z0L2">
    <property type="glycosylation" value="1 site, No reported glycans"/>
</dbReference>
<dbReference type="GlyGen" id="Q9Z0L2">
    <property type="glycosylation" value="1 site"/>
</dbReference>
<dbReference type="PhosphoSitePlus" id="Q9Z0L2"/>
<dbReference type="PaxDb" id="10090-ENSMUSP00000064521"/>
<dbReference type="PeptideAtlas" id="Q9Z0L2"/>
<dbReference type="ABCD" id="Q9Z0L2">
    <property type="antibodies" value="4 sequenced antibodies"/>
</dbReference>
<dbReference type="Antibodypedia" id="18382">
    <property type="antibodies" value="369 antibodies from 30 providers"/>
</dbReference>
<dbReference type="DNASU" id="11876"/>
<dbReference type="Ensembl" id="ENSMUST00000070816.9">
    <molecule id="Q9Z0L2-1"/>
    <property type="protein sequence ID" value="ENSMUSP00000064521.3"/>
    <property type="gene ID" value="ENSMUSG00000028539.15"/>
</dbReference>
<dbReference type="Ensembl" id="ENSMUST00000097913.9">
    <molecule id="Q9Z0L2-1"/>
    <property type="protein sequence ID" value="ENSMUSP00000095526.3"/>
    <property type="gene ID" value="ENSMUSG00000028539.15"/>
</dbReference>
<dbReference type="GeneID" id="11876"/>
<dbReference type="KEGG" id="mmu:11876"/>
<dbReference type="UCSC" id="uc008ujh.2">
    <molecule id="Q9Z0L2-1"/>
    <property type="organism name" value="mouse"/>
</dbReference>
<dbReference type="AGR" id="MGI:1333791"/>
<dbReference type="CTD" id="9048"/>
<dbReference type="MGI" id="MGI:1333791">
    <property type="gene designation" value="Artn"/>
</dbReference>
<dbReference type="VEuPathDB" id="HostDB:ENSMUSG00000028539"/>
<dbReference type="eggNOG" id="ENOG502S53F">
    <property type="taxonomic scope" value="Eukaryota"/>
</dbReference>
<dbReference type="GeneTree" id="ENSGT00950000182993"/>
<dbReference type="HOGENOM" id="CLU_102221_0_0_1"/>
<dbReference type="InParanoid" id="Q9Z0L2"/>
<dbReference type="OMA" id="VTQPCCR"/>
<dbReference type="OrthoDB" id="9936891at2759"/>
<dbReference type="PhylomeDB" id="Q9Z0L2"/>
<dbReference type="TreeFam" id="TF332366"/>
<dbReference type="Reactome" id="R-MMU-5673001">
    <property type="pathway name" value="RAF/MAP kinase cascade"/>
</dbReference>
<dbReference type="Reactome" id="R-MMU-8853659">
    <property type="pathway name" value="RET signaling"/>
</dbReference>
<dbReference type="BioGRID-ORCS" id="11876">
    <property type="hits" value="1 hit in 78 CRISPR screens"/>
</dbReference>
<dbReference type="PRO" id="PR:Q9Z0L2"/>
<dbReference type="Proteomes" id="UP000000589">
    <property type="component" value="Chromosome 4"/>
</dbReference>
<dbReference type="RNAct" id="Q9Z0L2">
    <property type="molecule type" value="protein"/>
</dbReference>
<dbReference type="Bgee" id="ENSMUSG00000028539">
    <property type="expression patterns" value="Expressed in mesodermal cell in embryo and 62 other cell types or tissues"/>
</dbReference>
<dbReference type="GO" id="GO:0005615">
    <property type="term" value="C:extracellular space"/>
    <property type="evidence" value="ECO:0000314"/>
    <property type="project" value="MGI"/>
</dbReference>
<dbReference type="GO" id="GO:0030116">
    <property type="term" value="F:glial cell-derived neurotrophic factor receptor binding"/>
    <property type="evidence" value="ECO:0000266"/>
    <property type="project" value="MGI"/>
</dbReference>
<dbReference type="GO" id="GO:0008083">
    <property type="term" value="F:growth factor activity"/>
    <property type="evidence" value="ECO:0000250"/>
    <property type="project" value="UniProtKB"/>
</dbReference>
<dbReference type="GO" id="GO:0030971">
    <property type="term" value="F:receptor tyrosine kinase binding"/>
    <property type="evidence" value="ECO:0007669"/>
    <property type="project" value="InterPro"/>
</dbReference>
<dbReference type="GO" id="GO:0005102">
    <property type="term" value="F:signaling receptor binding"/>
    <property type="evidence" value="ECO:0000353"/>
    <property type="project" value="MGI"/>
</dbReference>
<dbReference type="GO" id="GO:0007411">
    <property type="term" value="P:axon guidance"/>
    <property type="evidence" value="ECO:0000314"/>
    <property type="project" value="MGI"/>
</dbReference>
<dbReference type="GO" id="GO:0007166">
    <property type="term" value="P:cell surface receptor signaling pathway"/>
    <property type="evidence" value="ECO:0000266"/>
    <property type="project" value="MGI"/>
</dbReference>
<dbReference type="GO" id="GO:0035860">
    <property type="term" value="P:glial cell-derived neurotrophic factor receptor signaling pathway"/>
    <property type="evidence" value="ECO:0007669"/>
    <property type="project" value="Ensembl"/>
</dbReference>
<dbReference type="GO" id="GO:0050930">
    <property type="term" value="P:induction of positive chemotaxis"/>
    <property type="evidence" value="ECO:0000314"/>
    <property type="project" value="MGI"/>
</dbReference>
<dbReference type="GO" id="GO:0097021">
    <property type="term" value="P:lymphocyte migration into lymphoid organs"/>
    <property type="evidence" value="ECO:0000315"/>
    <property type="project" value="UniProtKB"/>
</dbReference>
<dbReference type="GO" id="GO:0007422">
    <property type="term" value="P:peripheral nervous system development"/>
    <property type="evidence" value="ECO:0000315"/>
    <property type="project" value="MGI"/>
</dbReference>
<dbReference type="GO" id="GO:0061146">
    <property type="term" value="P:Peyer's patch morphogenesis"/>
    <property type="evidence" value="ECO:0000315"/>
    <property type="project" value="UniProtKB"/>
</dbReference>
<dbReference type="CDD" id="cd19381">
    <property type="entry name" value="TGF_beta_Artemin"/>
    <property type="match status" value="1"/>
</dbReference>
<dbReference type="FunFam" id="2.10.90.10:FF:000032">
    <property type="entry name" value="Artemin"/>
    <property type="match status" value="1"/>
</dbReference>
<dbReference type="Gene3D" id="2.10.90.10">
    <property type="entry name" value="Cystine-knot cytokines"/>
    <property type="match status" value="1"/>
</dbReference>
<dbReference type="InterPro" id="IPR029034">
    <property type="entry name" value="Cystine-knot_cytokine"/>
</dbReference>
<dbReference type="InterPro" id="IPR043401">
    <property type="entry name" value="GDNF_fam"/>
</dbReference>
<dbReference type="InterPro" id="IPR001839">
    <property type="entry name" value="TGF-b_C"/>
</dbReference>
<dbReference type="PANTHER" id="PTHR12173:SF9">
    <property type="entry name" value="ARTEMIN"/>
    <property type="match status" value="1"/>
</dbReference>
<dbReference type="PANTHER" id="PTHR12173">
    <property type="entry name" value="GDNF SUBFAMILY OF TGF-BETA FAMILY"/>
    <property type="match status" value="1"/>
</dbReference>
<dbReference type="Pfam" id="PF00019">
    <property type="entry name" value="TGF_beta"/>
    <property type="match status" value="1"/>
</dbReference>
<dbReference type="SMART" id="SM00204">
    <property type="entry name" value="TGFB"/>
    <property type="match status" value="1"/>
</dbReference>
<dbReference type="SUPFAM" id="SSF57501">
    <property type="entry name" value="Cystine-knot cytokines"/>
    <property type="match status" value="1"/>
</dbReference>
<dbReference type="PROSITE" id="PS51362">
    <property type="entry name" value="TGF_BETA_2"/>
    <property type="match status" value="1"/>
</dbReference>
<sequence length="224" mass="23726">MELGLAEPTALSHCLRPRWQSAWWPTLAVLALLSCVTEASLDPMSRSPAARDGPSPVLAPPTDHLPGGHTAHLCSERTLRPPPQSPQPAPPPPGPALQSPPAALRGARAARAGTRSSRARTTDARGCRLRSQLVPVSALGLGHSSDELIRFRFCSGSCRRARSQHDLSLASLLGAGALRSPPGSRPISQPCCRPTRYEAVSFMDVNSTWRTVDHLSATACGCLG</sequence>
<name>ARTN_MOUSE</name>
<comment type="function">
    <text evidence="1 4 5">Growth factor that supports the survival of sensory and sympathetic peripheral neurons in culture and also supports the survival of dopaminergic neurons of the ventral mid-brain (By similarity). Acts by binding to its coreceptor, GFRA3, leading to autophosphorylation and activation of the RET receptor (PubMed:15204970). Strong attractant of gut hematopoietic cells thus promoting the formation Peyer's patch-like structures, a major component of the gut-associated lymphoid tissue (PubMed:17322904).</text>
</comment>
<comment type="subunit">
    <text evidence="1 9">Homodimer; disulfide-linked (By similarity). Interacts with GFRA3 coreceptor and RET: forms a 2:2:2 ternary complex composed of ARTN ligand, GFRA3 and RET receptor (Probable).</text>
</comment>
<comment type="subcellular location">
    <subcellularLocation>
        <location evidence="4">Secreted</location>
    </subcellularLocation>
</comment>
<comment type="alternative products">
    <event type="alternative splicing"/>
    <isoform>
        <id>Q9Z0L2-1</id>
        <name>1</name>
        <sequence type="displayed"/>
    </isoform>
    <isoform>
        <id>Q9Z0L2-2</id>
        <name>2</name>
        <sequence type="described" ref="VSP_019338 VSP_019340"/>
    </isoform>
    <isoform>
        <id>Q9Z0L2-3</id>
        <name>3</name>
        <sequence type="described" ref="VSP_019337 VSP_019339 VSP_019340"/>
    </isoform>
</comment>
<comment type="similarity">
    <text evidence="8">Belongs to the TGF-beta family. GDNF subfamily.</text>
</comment>
<evidence type="ECO:0000250" key="1">
    <source>
        <dbReference type="UniProtKB" id="Q5T4W7"/>
    </source>
</evidence>
<evidence type="ECO:0000255" key="2"/>
<evidence type="ECO:0000256" key="3">
    <source>
        <dbReference type="SAM" id="MobiDB-lite"/>
    </source>
</evidence>
<evidence type="ECO:0000269" key="4">
    <source>
    </source>
</evidence>
<evidence type="ECO:0000269" key="5">
    <source>
    </source>
</evidence>
<evidence type="ECO:0000303" key="6">
    <source>
    </source>
</evidence>
<evidence type="ECO:0000303" key="7">
    <source>
    </source>
</evidence>
<evidence type="ECO:0000305" key="8"/>
<evidence type="ECO:0000305" key="9">
    <source>
    </source>
</evidence>
<evidence type="ECO:0000312" key="10">
    <source>
        <dbReference type="MGI" id="MGI:1333791"/>
    </source>
</evidence>
<accession>Q9Z0L2</accession>
<accession>Q3SXF4</accession>
<accession>Q3SXF5</accession>
<gene>
    <name evidence="7 10" type="primary">Artn</name>
</gene>
<proteinExistence type="evidence at protein level"/>
<feature type="signal peptide" evidence="2">
    <location>
        <begin position="1"/>
        <end position="39"/>
    </location>
</feature>
<feature type="propeptide" id="PRO_0000240288" evidence="9">
    <location>
        <begin position="40"/>
        <end position="111"/>
    </location>
</feature>
<feature type="chain" id="PRO_0000240289" description="Artemin" evidence="9">
    <location>
        <begin position="112"/>
        <end position="224"/>
    </location>
</feature>
<feature type="region of interest" description="Disordered" evidence="3">
    <location>
        <begin position="43"/>
        <end position="124"/>
    </location>
</feature>
<feature type="compositionally biased region" description="Pro residues" evidence="3">
    <location>
        <begin position="80"/>
        <end position="95"/>
    </location>
</feature>
<feature type="compositionally biased region" description="Low complexity" evidence="3">
    <location>
        <begin position="96"/>
        <end position="116"/>
    </location>
</feature>
<feature type="glycosylation site" description="N-linked (GlcNAc...) asparagine" evidence="2">
    <location>
        <position position="206"/>
    </location>
</feature>
<feature type="disulfide bond" evidence="1">
    <location>
        <begin position="127"/>
        <end position="192"/>
    </location>
</feature>
<feature type="disulfide bond" evidence="1">
    <location>
        <begin position="154"/>
        <end position="220"/>
    </location>
</feature>
<feature type="disulfide bond" evidence="1">
    <location>
        <begin position="158"/>
        <end position="222"/>
    </location>
</feature>
<feature type="disulfide bond" description="Interchain" evidence="1">
    <location>
        <position position="191"/>
    </location>
</feature>
<feature type="splice variant" id="VSP_019337" description="In isoform 3." evidence="6">
    <location>
        <begin position="1"/>
        <end position="43"/>
    </location>
</feature>
<feature type="splice variant" id="VSP_019338" description="In isoform 2." evidence="6">
    <original>GGHTAHLCSERTL</original>
    <variation>AGYGGCRAQAPGR</variation>
    <location>
        <begin position="67"/>
        <end position="79"/>
    </location>
</feature>
<feature type="splice variant" id="VSP_019339" description="In isoform 3." evidence="6">
    <original>GGHTAHLCSERTL</original>
    <variation>GYGGCRAQAPGR</variation>
    <location>
        <begin position="67"/>
        <end position="79"/>
    </location>
</feature>
<feature type="splice variant" id="VSP_019340" description="In isoform 2 and isoform 3." evidence="6">
    <location>
        <begin position="80"/>
        <end position="224"/>
    </location>
</feature>
<protein>
    <recommendedName>
        <fullName evidence="7">Artemin</fullName>
    </recommendedName>
</protein>
<reference key="1">
    <citation type="journal article" date="1998" name="Neuron">
        <title>Artemin, a novel member of the GDNF ligand family, supports peripheral and central neurons and signals through the GFRalpha3-RET receptor complex.</title>
        <authorList>
            <person name="Baloh R.H."/>
            <person name="Tansey M.G."/>
            <person name="Lampe P.A."/>
            <person name="Fahrner T.J."/>
            <person name="Enomoto H."/>
            <person name="Simburger K.S."/>
            <person name="Leitner M.L."/>
            <person name="Araki T."/>
            <person name="Johnson E.M. Jr."/>
            <person name="Milbrandt J."/>
        </authorList>
    </citation>
    <scope>NUCLEOTIDE SEQUENCE [MRNA] (ISOFORM 1)</scope>
</reference>
<reference key="2">
    <citation type="journal article" date="2005" name="Science">
        <title>The transcriptional landscape of the mammalian genome.</title>
        <authorList>
            <person name="Carninci P."/>
            <person name="Kasukawa T."/>
            <person name="Katayama S."/>
            <person name="Gough J."/>
            <person name="Frith M.C."/>
            <person name="Maeda N."/>
            <person name="Oyama R."/>
            <person name="Ravasi T."/>
            <person name="Lenhard B."/>
            <person name="Wells C."/>
            <person name="Kodzius R."/>
            <person name="Shimokawa K."/>
            <person name="Bajic V.B."/>
            <person name="Brenner S.E."/>
            <person name="Batalov S."/>
            <person name="Forrest A.R."/>
            <person name="Zavolan M."/>
            <person name="Davis M.J."/>
            <person name="Wilming L.G."/>
            <person name="Aidinis V."/>
            <person name="Allen J.E."/>
            <person name="Ambesi-Impiombato A."/>
            <person name="Apweiler R."/>
            <person name="Aturaliya R.N."/>
            <person name="Bailey T.L."/>
            <person name="Bansal M."/>
            <person name="Baxter L."/>
            <person name="Beisel K.W."/>
            <person name="Bersano T."/>
            <person name="Bono H."/>
            <person name="Chalk A.M."/>
            <person name="Chiu K.P."/>
            <person name="Choudhary V."/>
            <person name="Christoffels A."/>
            <person name="Clutterbuck D.R."/>
            <person name="Crowe M.L."/>
            <person name="Dalla E."/>
            <person name="Dalrymple B.P."/>
            <person name="de Bono B."/>
            <person name="Della Gatta G."/>
            <person name="di Bernardo D."/>
            <person name="Down T."/>
            <person name="Engstrom P."/>
            <person name="Fagiolini M."/>
            <person name="Faulkner G."/>
            <person name="Fletcher C.F."/>
            <person name="Fukushima T."/>
            <person name="Furuno M."/>
            <person name="Futaki S."/>
            <person name="Gariboldi M."/>
            <person name="Georgii-Hemming P."/>
            <person name="Gingeras T.R."/>
            <person name="Gojobori T."/>
            <person name="Green R.E."/>
            <person name="Gustincich S."/>
            <person name="Harbers M."/>
            <person name="Hayashi Y."/>
            <person name="Hensch T.K."/>
            <person name="Hirokawa N."/>
            <person name="Hill D."/>
            <person name="Huminiecki L."/>
            <person name="Iacono M."/>
            <person name="Ikeo K."/>
            <person name="Iwama A."/>
            <person name="Ishikawa T."/>
            <person name="Jakt M."/>
            <person name="Kanapin A."/>
            <person name="Katoh M."/>
            <person name="Kawasawa Y."/>
            <person name="Kelso J."/>
            <person name="Kitamura H."/>
            <person name="Kitano H."/>
            <person name="Kollias G."/>
            <person name="Krishnan S.P."/>
            <person name="Kruger A."/>
            <person name="Kummerfeld S.K."/>
            <person name="Kurochkin I.V."/>
            <person name="Lareau L.F."/>
            <person name="Lazarevic D."/>
            <person name="Lipovich L."/>
            <person name="Liu J."/>
            <person name="Liuni S."/>
            <person name="McWilliam S."/>
            <person name="Madan Babu M."/>
            <person name="Madera M."/>
            <person name="Marchionni L."/>
            <person name="Matsuda H."/>
            <person name="Matsuzawa S."/>
            <person name="Miki H."/>
            <person name="Mignone F."/>
            <person name="Miyake S."/>
            <person name="Morris K."/>
            <person name="Mottagui-Tabar S."/>
            <person name="Mulder N."/>
            <person name="Nakano N."/>
            <person name="Nakauchi H."/>
            <person name="Ng P."/>
            <person name="Nilsson R."/>
            <person name="Nishiguchi S."/>
            <person name="Nishikawa S."/>
            <person name="Nori F."/>
            <person name="Ohara O."/>
            <person name="Okazaki Y."/>
            <person name="Orlando V."/>
            <person name="Pang K.C."/>
            <person name="Pavan W.J."/>
            <person name="Pavesi G."/>
            <person name="Pesole G."/>
            <person name="Petrovsky N."/>
            <person name="Piazza S."/>
            <person name="Reed J."/>
            <person name="Reid J.F."/>
            <person name="Ring B.Z."/>
            <person name="Ringwald M."/>
            <person name="Rost B."/>
            <person name="Ruan Y."/>
            <person name="Salzberg S.L."/>
            <person name="Sandelin A."/>
            <person name="Schneider C."/>
            <person name="Schoenbach C."/>
            <person name="Sekiguchi K."/>
            <person name="Semple C.A."/>
            <person name="Seno S."/>
            <person name="Sessa L."/>
            <person name="Sheng Y."/>
            <person name="Shibata Y."/>
            <person name="Shimada H."/>
            <person name="Shimada K."/>
            <person name="Silva D."/>
            <person name="Sinclair B."/>
            <person name="Sperling S."/>
            <person name="Stupka E."/>
            <person name="Sugiura K."/>
            <person name="Sultana R."/>
            <person name="Takenaka Y."/>
            <person name="Taki K."/>
            <person name="Tammoja K."/>
            <person name="Tan S.L."/>
            <person name="Tang S."/>
            <person name="Taylor M.S."/>
            <person name="Tegner J."/>
            <person name="Teichmann S.A."/>
            <person name="Ueda H.R."/>
            <person name="van Nimwegen E."/>
            <person name="Verardo R."/>
            <person name="Wei C.L."/>
            <person name="Yagi K."/>
            <person name="Yamanishi H."/>
            <person name="Zabarovsky E."/>
            <person name="Zhu S."/>
            <person name="Zimmer A."/>
            <person name="Hide W."/>
            <person name="Bult C."/>
            <person name="Grimmond S.M."/>
            <person name="Teasdale R.D."/>
            <person name="Liu E.T."/>
            <person name="Brusic V."/>
            <person name="Quackenbush J."/>
            <person name="Wahlestedt C."/>
            <person name="Mattick J.S."/>
            <person name="Hume D.A."/>
            <person name="Kai C."/>
            <person name="Sasaki D."/>
            <person name="Tomaru Y."/>
            <person name="Fukuda S."/>
            <person name="Kanamori-Katayama M."/>
            <person name="Suzuki M."/>
            <person name="Aoki J."/>
            <person name="Arakawa T."/>
            <person name="Iida J."/>
            <person name="Imamura K."/>
            <person name="Itoh M."/>
            <person name="Kato T."/>
            <person name="Kawaji H."/>
            <person name="Kawagashira N."/>
            <person name="Kawashima T."/>
            <person name="Kojima M."/>
            <person name="Kondo S."/>
            <person name="Konno H."/>
            <person name="Nakano K."/>
            <person name="Ninomiya N."/>
            <person name="Nishio T."/>
            <person name="Okada M."/>
            <person name="Plessy C."/>
            <person name="Shibata K."/>
            <person name="Shiraki T."/>
            <person name="Suzuki S."/>
            <person name="Tagami M."/>
            <person name="Waki K."/>
            <person name="Watahiki A."/>
            <person name="Okamura-Oho Y."/>
            <person name="Suzuki H."/>
            <person name="Kawai J."/>
            <person name="Hayashizaki Y."/>
        </authorList>
    </citation>
    <scope>NUCLEOTIDE SEQUENCE [LARGE SCALE MRNA] (ISOFORM 1)</scope>
    <source>
        <strain>C57BL/6J</strain>
        <strain>NOD</strain>
        <tissue>Oviduct</tissue>
        <tissue>Spleen</tissue>
        <tissue>Testis</tissue>
    </source>
</reference>
<reference key="3">
    <citation type="journal article" date="2004" name="Genome Res.">
        <title>The status, quality, and expansion of the NIH full-length cDNA project: the Mammalian Gene Collection (MGC).</title>
        <authorList>
            <consortium name="The MGC Project Team"/>
        </authorList>
    </citation>
    <scope>NUCLEOTIDE SEQUENCE [LARGE SCALE MRNA] (ISOFORMS 2 AND 3)</scope>
</reference>
<reference key="4">
    <citation type="journal article" date="2004" name="Toxicol. Pathol.">
        <title>The candidate neuroprotective agent artemin induces autonomic neural dysplasia without preventing peripheral nerve dysfunction.</title>
        <authorList>
            <person name="Bolon B."/>
            <person name="Jing S."/>
            <person name="Asuncion F."/>
            <person name="Scully S."/>
            <person name="Pisegna M."/>
            <person name="Van G.Y."/>
            <person name="Hu Z."/>
            <person name="Yu Y.B."/>
            <person name="Min H."/>
            <person name="Wild K."/>
            <person name="Rosenfeld R.D."/>
            <person name="Tarpley J."/>
            <person name="Carnahan J."/>
            <person name="Duryea D."/>
            <person name="Hill D."/>
            <person name="Kaufman S."/>
            <person name="Yan X.Q."/>
            <person name="Juan T."/>
            <person name="Christensen K."/>
            <person name="McCabe J."/>
            <person name="Simonet W.S."/>
        </authorList>
    </citation>
    <scope>FUNCTION</scope>
    <scope>SUBCELLULAR LOCATION</scope>
    <scope>SUBUNIT</scope>
</reference>
<reference key="5">
    <citation type="journal article" date="2007" name="Nature">
        <title>Tyrosine kinase receptor RET is a key regulator of Peyer's patch organogenesis.</title>
        <authorList>
            <person name="Veiga-Fernandes H."/>
            <person name="Coles M.C."/>
            <person name="Foster K.E."/>
            <person name="Patel A."/>
            <person name="Williams A."/>
            <person name="Natarajan D."/>
            <person name="Barlow A."/>
            <person name="Pachnis V."/>
            <person name="Kioussis D."/>
        </authorList>
    </citation>
    <scope>FUNCTION IN PEYER'S PATCH ORGANOGENESIS</scope>
    <scope>INTERACTION WITH RET</scope>
</reference>